<proteinExistence type="evidence at protein level"/>
<accession>Q95209</accession>
<organism>
    <name type="scientific">Oryctolagus cuniculus</name>
    <name type="common">Rabbit</name>
    <dbReference type="NCBI Taxonomy" id="9986"/>
    <lineage>
        <taxon>Eukaryota</taxon>
        <taxon>Metazoa</taxon>
        <taxon>Chordata</taxon>
        <taxon>Craniata</taxon>
        <taxon>Vertebrata</taxon>
        <taxon>Euteleostomi</taxon>
        <taxon>Mammalia</taxon>
        <taxon>Eutheria</taxon>
        <taxon>Euarchontoglires</taxon>
        <taxon>Glires</taxon>
        <taxon>Lagomorpha</taxon>
        <taxon>Leporidae</taxon>
        <taxon>Oryctolagus</taxon>
    </lineage>
</organism>
<evidence type="ECO:0000250" key="1"/>
<evidence type="ECO:0000250" key="2">
    <source>
        <dbReference type="UniProtKB" id="O88307"/>
    </source>
</evidence>
<evidence type="ECO:0000250" key="3">
    <source>
        <dbReference type="UniProtKB" id="Q92673"/>
    </source>
</evidence>
<evidence type="ECO:0000255" key="4"/>
<evidence type="ECO:0000255" key="5">
    <source>
        <dbReference type="PROSITE-ProRule" id="PRU00124"/>
    </source>
</evidence>
<evidence type="ECO:0000255" key="6">
    <source>
        <dbReference type="PROSITE-ProRule" id="PRU00316"/>
    </source>
</evidence>
<evidence type="ECO:0000269" key="7">
    <source>
    </source>
</evidence>
<evidence type="ECO:0000269" key="8">
    <source>
    </source>
</evidence>
<evidence type="ECO:0000269" key="9">
    <source>
    </source>
</evidence>
<evidence type="ECO:0000303" key="10">
    <source>
    </source>
</evidence>
<evidence type="ECO:0000305" key="11"/>
<feature type="signal peptide" evidence="4">
    <location>
        <begin position="1"/>
        <end position="28"/>
    </location>
</feature>
<feature type="propeptide" id="PRO_0000033168" description="Removed in mature form" evidence="1">
    <location>
        <begin position="29"/>
        <end position="81"/>
    </location>
</feature>
<feature type="chain" id="PRO_0000033169" description="Sortilin-related receptor">
    <location>
        <begin position="82"/>
        <end position="2213"/>
    </location>
</feature>
<feature type="topological domain" description="Lumenal" evidence="4">
    <location>
        <begin position="82"/>
        <end position="2136"/>
    </location>
</feature>
<feature type="transmembrane region" description="Helical" evidence="4">
    <location>
        <begin position="2137"/>
        <end position="2157"/>
    </location>
</feature>
<feature type="topological domain" description="Cytoplasmic" evidence="4">
    <location>
        <begin position="2158"/>
        <end position="2213"/>
    </location>
</feature>
<feature type="repeat" description="BNR 1">
    <location>
        <begin position="136"/>
        <end position="147"/>
    </location>
</feature>
<feature type="repeat" description="BNR 2">
    <location>
        <begin position="232"/>
        <end position="243"/>
    </location>
</feature>
<feature type="repeat" description="BNR 3">
    <location>
        <begin position="441"/>
        <end position="452"/>
    </location>
</feature>
<feature type="repeat" description="BNR 4">
    <location>
        <begin position="521"/>
        <end position="532"/>
    </location>
</feature>
<feature type="repeat" description="BNR 5">
    <location>
        <begin position="562"/>
        <end position="573"/>
    </location>
</feature>
<feature type="repeat" description="LDL-receptor class B 1">
    <location>
        <begin position="799"/>
        <end position="842"/>
    </location>
</feature>
<feature type="repeat" description="LDL-receptor class B 2">
    <location>
        <begin position="843"/>
        <end position="886"/>
    </location>
</feature>
<feature type="repeat" description="LDL-receptor class B 3">
    <location>
        <begin position="887"/>
        <end position="929"/>
    </location>
</feature>
<feature type="repeat" description="LDL-receptor class B 4">
    <location>
        <begin position="930"/>
        <end position="971"/>
    </location>
</feature>
<feature type="repeat" description="LDL-receptor class B 5">
    <location>
        <begin position="972"/>
        <end position="1012"/>
    </location>
</feature>
<feature type="domain" description="EGF-like">
    <location>
        <begin position="1025"/>
        <end position="1071"/>
    </location>
</feature>
<feature type="domain" description="LDL-receptor class A 1" evidence="5">
    <location>
        <begin position="1075"/>
        <end position="1113"/>
    </location>
</feature>
<feature type="domain" description="LDL-receptor class A 2" evidence="5">
    <location>
        <begin position="1114"/>
        <end position="1154"/>
    </location>
</feature>
<feature type="domain" description="LDL-receptor class A 3" evidence="5">
    <location>
        <begin position="1155"/>
        <end position="1193"/>
    </location>
</feature>
<feature type="domain" description="LDL-receptor class A 4" evidence="5">
    <location>
        <begin position="1196"/>
        <end position="1235"/>
    </location>
</feature>
<feature type="domain" description="LDL-receptor class A 5" evidence="5">
    <location>
        <begin position="1237"/>
        <end position="1271"/>
    </location>
</feature>
<feature type="domain" description="LDL-receptor class A 6" evidence="5">
    <location>
        <begin position="1272"/>
        <end position="1316"/>
    </location>
</feature>
<feature type="domain" description="LDL-receptor class A 7" evidence="5">
    <location>
        <begin position="1322"/>
        <end position="1360"/>
    </location>
</feature>
<feature type="domain" description="LDL-receptor class A 8" evidence="5">
    <location>
        <begin position="1365"/>
        <end position="1404"/>
    </location>
</feature>
<feature type="domain" description="LDL-receptor class A 9" evidence="5">
    <location>
        <begin position="1416"/>
        <end position="1454"/>
    </location>
</feature>
<feature type="domain" description="LDL-receptor class A 10" evidence="5">
    <location>
        <begin position="1468"/>
        <end position="1507"/>
    </location>
</feature>
<feature type="domain" description="LDL-receptor class A 11" evidence="5">
    <location>
        <begin position="1511"/>
        <end position="1550"/>
    </location>
</feature>
<feature type="domain" description="Fibronectin type-III 1" evidence="6">
    <location>
        <begin position="1556"/>
        <end position="1648"/>
    </location>
</feature>
<feature type="domain" description="Fibronectin type-III 2" evidence="6">
    <location>
        <begin position="1652"/>
        <end position="1744"/>
    </location>
</feature>
<feature type="domain" description="Fibronectin type-III 3" evidence="6">
    <location>
        <begin position="1748"/>
        <end position="1843"/>
    </location>
</feature>
<feature type="domain" description="Fibronectin type-III 4" evidence="6">
    <location>
        <begin position="1842"/>
        <end position="1926"/>
    </location>
</feature>
<feature type="domain" description="Fibronectin type-III 5" evidence="6">
    <location>
        <begin position="1933"/>
        <end position="2028"/>
    </location>
</feature>
<feature type="domain" description="Fibronectin type-III 6" evidence="6">
    <location>
        <begin position="2029"/>
        <end position="2117"/>
    </location>
</feature>
<feature type="region of interest" description="Required for efficient Golgi apparatus - endosome sorting" evidence="3">
    <location>
        <begin position="2189"/>
        <end position="2213"/>
    </location>
</feature>
<feature type="region of interest" description="Required for interaction with GGA1 and GGA2" evidence="3">
    <location>
        <begin position="2200"/>
        <end position="2213"/>
    </location>
</feature>
<feature type="short sequence motif" description="Cell attachment site" evidence="4">
    <location>
        <begin position="63"/>
        <end position="65"/>
    </location>
</feature>
<feature type="short sequence motif" description="Potential nuclear localization signal for the C-terminal fragment generated by PSEN1" evidence="3">
    <location>
        <begin position="2160"/>
        <end position="2163"/>
    </location>
</feature>
<feature type="short sequence motif" description="Endocytosis signal" evidence="4">
    <location>
        <begin position="2171"/>
        <end position="2176"/>
    </location>
</feature>
<feature type="short sequence motif" description="DXXLL motif involved in the interaction with GGA1" evidence="3">
    <location>
        <begin position="2207"/>
        <end position="2211"/>
    </location>
</feature>
<feature type="modified residue" description="Phosphoserine" evidence="3">
    <location>
        <position position="114"/>
    </location>
</feature>
<feature type="modified residue" description="Phosphoserine; by ROCK2" evidence="3">
    <location>
        <position position="2205"/>
    </location>
</feature>
<feature type="glycosylation site" description="N-linked (GlcNAc...) asparagine" evidence="4">
    <location>
        <position position="99"/>
    </location>
</feature>
<feature type="glycosylation site" description="N-linked (GlcNAc...) asparagine" evidence="4">
    <location>
        <position position="158"/>
    </location>
</feature>
<feature type="glycosylation site" description="N-linked (GlcNAc...) asparagine" evidence="4">
    <location>
        <position position="368"/>
    </location>
</feature>
<feature type="glycosylation site" description="N-linked (GlcNAc...) asparagine" evidence="4">
    <location>
        <position position="430"/>
    </location>
</feature>
<feature type="glycosylation site" description="N-linked (GlcNAc...) asparagine" evidence="4">
    <location>
        <position position="616"/>
    </location>
</feature>
<feature type="glycosylation site" description="N-linked (GlcNAc...) asparagine" evidence="4">
    <location>
        <position position="674"/>
    </location>
</feature>
<feature type="glycosylation site" description="N-linked (GlcNAc...) asparagine" evidence="4">
    <location>
        <position position="817"/>
    </location>
</feature>
<feature type="glycosylation site" description="N-linked (GlcNAc...) asparagine" evidence="4">
    <location>
        <position position="870"/>
    </location>
</feature>
<feature type="glycosylation site" description="N-linked (GlcNAc...) asparagine" evidence="4">
    <location>
        <position position="1034"/>
    </location>
</feature>
<feature type="glycosylation site" description="N-linked (GlcNAc...) asparagine" evidence="4">
    <location>
        <position position="1067"/>
    </location>
</feature>
<feature type="glycosylation site" description="N-linked (GlcNAc...) asparagine" evidence="4">
    <location>
        <position position="1163"/>
    </location>
</feature>
<feature type="glycosylation site" description="N-linked (GlcNAc...) asparagine" evidence="4">
    <location>
        <position position="1190"/>
    </location>
</feature>
<feature type="glycosylation site" description="N-linked (GlcNAc...) asparagine" evidence="4">
    <location>
        <position position="1245"/>
    </location>
</feature>
<feature type="glycosylation site" description="N-linked (GlcNAc...) asparagine" evidence="4">
    <location>
        <position position="1366"/>
    </location>
</feature>
<feature type="glycosylation site" description="N-linked (GlcNAc...) asparagine" evidence="4">
    <location>
        <position position="1457"/>
    </location>
</feature>
<feature type="glycosylation site" description="N-linked (GlcNAc...) asparagine" evidence="4">
    <location>
        <position position="1569"/>
    </location>
</feature>
<feature type="glycosylation site" description="N-linked (GlcNAc...) asparagine" evidence="4">
    <location>
        <position position="1607"/>
    </location>
</feature>
<feature type="glycosylation site" description="N-linked (GlcNAc...) asparagine" evidence="4">
    <location>
        <position position="1705"/>
    </location>
</feature>
<feature type="glycosylation site" description="N-linked (GlcNAc...) asparagine" evidence="4">
    <location>
        <position position="1732"/>
    </location>
</feature>
<feature type="glycosylation site" description="N-linked (GlcNAc...) asparagine" evidence="4">
    <location>
        <position position="1808"/>
    </location>
</feature>
<feature type="glycosylation site" description="N-linked (GlcNAc...) asparagine" evidence="4">
    <location>
        <position position="1853"/>
    </location>
</feature>
<feature type="glycosylation site" description="N-linked (GlcNAc...) asparagine" evidence="4">
    <location>
        <position position="1893"/>
    </location>
</feature>
<feature type="glycosylation site" description="N-linked (GlcNAc...) asparagine" evidence="4">
    <location>
        <position position="1985"/>
    </location>
</feature>
<feature type="glycosylation site" description="N-linked (GlcNAc...) asparagine" evidence="4">
    <location>
        <position position="2009"/>
    </location>
</feature>
<feature type="glycosylation site" description="N-linked (GlcNAc...) asparagine" evidence="4">
    <location>
        <position position="2053"/>
    </location>
</feature>
<feature type="glycosylation site" description="N-linked (GlcNAc...) asparagine" evidence="4">
    <location>
        <position position="2068"/>
    </location>
</feature>
<feature type="glycosylation site" description="N-linked (GlcNAc...) asparagine" evidence="4">
    <location>
        <position position="2075"/>
    </location>
</feature>
<feature type="glycosylation site" description="N-linked (GlcNAc...) asparagine" evidence="4">
    <location>
        <position position="2091"/>
    </location>
</feature>
<feature type="disulfide bond" evidence="5">
    <location>
        <begin position="1077"/>
        <end position="1089"/>
    </location>
</feature>
<feature type="disulfide bond" evidence="5">
    <location>
        <begin position="1084"/>
        <end position="1102"/>
    </location>
</feature>
<feature type="disulfide bond" evidence="5">
    <location>
        <begin position="1096"/>
        <end position="1111"/>
    </location>
</feature>
<feature type="disulfide bond" evidence="5">
    <location>
        <begin position="1116"/>
        <end position="1130"/>
    </location>
</feature>
<feature type="disulfide bond" evidence="5">
    <location>
        <begin position="1124"/>
        <end position="1143"/>
    </location>
</feature>
<feature type="disulfide bond" evidence="5">
    <location>
        <begin position="1137"/>
        <end position="1152"/>
    </location>
</feature>
<feature type="disulfide bond" evidence="5">
    <location>
        <begin position="1157"/>
        <end position="1169"/>
    </location>
</feature>
<feature type="disulfide bond" evidence="5">
    <location>
        <begin position="1164"/>
        <end position="1182"/>
    </location>
</feature>
<feature type="disulfide bond" evidence="5">
    <location>
        <begin position="1176"/>
        <end position="1191"/>
    </location>
</feature>
<feature type="disulfide bond" evidence="5">
    <location>
        <begin position="1198"/>
        <end position="1210"/>
    </location>
</feature>
<feature type="disulfide bond" evidence="5">
    <location>
        <begin position="1205"/>
        <end position="1223"/>
    </location>
</feature>
<feature type="disulfide bond" evidence="5">
    <location>
        <begin position="1217"/>
        <end position="1234"/>
    </location>
</feature>
<feature type="disulfide bond" evidence="5">
    <location>
        <begin position="1238"/>
        <end position="1248"/>
    </location>
</feature>
<feature type="disulfide bond" evidence="5">
    <location>
        <begin position="1243"/>
        <end position="1261"/>
    </location>
</feature>
<feature type="disulfide bond" evidence="5">
    <location>
        <begin position="1255"/>
        <end position="1270"/>
    </location>
</feature>
<feature type="disulfide bond" evidence="5">
    <location>
        <begin position="1274"/>
        <end position="1288"/>
    </location>
</feature>
<feature type="disulfide bond" evidence="5">
    <location>
        <begin position="1282"/>
        <end position="1301"/>
    </location>
</feature>
<feature type="disulfide bond" evidence="5">
    <location>
        <begin position="1295"/>
        <end position="1314"/>
    </location>
</feature>
<feature type="disulfide bond" evidence="5">
    <location>
        <begin position="1324"/>
        <end position="1336"/>
    </location>
</feature>
<feature type="disulfide bond" evidence="5">
    <location>
        <begin position="1331"/>
        <end position="1349"/>
    </location>
</feature>
<feature type="disulfide bond" evidence="5">
    <location>
        <begin position="1343"/>
        <end position="1358"/>
    </location>
</feature>
<feature type="disulfide bond" evidence="5">
    <location>
        <begin position="1367"/>
        <end position="1380"/>
    </location>
</feature>
<feature type="disulfide bond" evidence="5">
    <location>
        <begin position="1375"/>
        <end position="1393"/>
    </location>
</feature>
<feature type="disulfide bond" evidence="5">
    <location>
        <begin position="1387"/>
        <end position="1402"/>
    </location>
</feature>
<feature type="disulfide bond" evidence="5">
    <location>
        <begin position="1418"/>
        <end position="1430"/>
    </location>
</feature>
<feature type="disulfide bond" evidence="5">
    <location>
        <begin position="1425"/>
        <end position="1443"/>
    </location>
</feature>
<feature type="disulfide bond" evidence="5">
    <location>
        <begin position="1437"/>
        <end position="1452"/>
    </location>
</feature>
<feature type="disulfide bond" evidence="5">
    <location>
        <begin position="1470"/>
        <end position="1483"/>
    </location>
</feature>
<feature type="disulfide bond" evidence="5">
    <location>
        <begin position="1477"/>
        <end position="1496"/>
    </location>
</feature>
<feature type="disulfide bond" evidence="5">
    <location>
        <begin position="1490"/>
        <end position="1505"/>
    </location>
</feature>
<feature type="disulfide bond" evidence="5">
    <location>
        <begin position="1513"/>
        <end position="1526"/>
    </location>
</feature>
<feature type="disulfide bond" evidence="5">
    <location>
        <begin position="1520"/>
        <end position="1539"/>
    </location>
</feature>
<feature type="disulfide bond" evidence="5">
    <location>
        <begin position="1533"/>
        <end position="1548"/>
    </location>
</feature>
<comment type="function">
    <text evidence="2 3 7 8">Sorting receptor that directs several proteins to their correct location within the cell. Along with AP-1 complex, involved Golgi apparatus - endosome sorting. Sorting receptor for APP, regulating its intracellular trafficking and processing into amyloidogenic-beta peptides. Retains APP in the trans-Golgi network, hence preventing its transit through late endosomes where amyloid beta peptides Abeta40 and Abeta42 are generated. May also sort newly produced amyloid-beta peptides to lysosomes for catabolism. Does not affect APP trafficking from the endoplasmic reticulum to Golgi compartments. Sorting receptor for the BDNF receptor NTRK2/TRKB that facilitates NTRK2 trafficking between synaptic plasma membranes, postsynaptic densities and cell soma, hence positively regulates BDNF signaling by controlling the intracellular location of its receptor. Sorting receptor for GDNF that promotes GDNF regulated, but not constitutive secretion. Sorting receptor for the GDNF-GFRA1 complex, directing it from the cell surface to endosomes. GDNF is then targeted to lysosomes and degraded, while its receptor GFRA1 recycles back to the cell membrane, resulting in a GDNF clearance pathway. The SORL1-GFRA1 complex further targets RET for endocytosis, but not for degradation, affecting GDNF-induced neurotrophic activities. Sorting receptor for ERBB2/HER2. Regulates ERBB2 subcellular distribution by promoting its recycling after internalization from endosomes back to the plasma membrane, hence stimulating phosphoinositide 3-kinase (PI3K)-dependent ERBB2 signaling. Sorting receptor for lipoprotein lipase LPL. Promotes LPL localization to endosomes and later to the lysosomes, leading to degradation of newly synthesized LPL. Potential sorting receptor for APOA5, inducing APOA5 internalization to early endosomes, then to late endosomes, wherefrom a portion is sent to lysosomes and degradation, another portion is sorted to the trans-Golgi network. Sorting receptor for the insulin receptor INSR. Promotes recycling of internalized INSR via the Golgi apparatus back to the cell surface, thereby preventing lysosomal INSR catabolism, increasing INSR cell surface expression and strengthening insulin signal reception in adipose tissue. Does not affect INSR internalization (By similarity). Plays a role in renal ion homeostasis, controlling the phospho-regulation of SLC12A1/NKCC2 by STK39/SPAK kinase and PPP3CB/calcineurin A beta phosphatase, possibly through intracellular sorting of STK39 and PPP3CB (By similarity). Stimulates, via the N-terminal ectodomain, the proliferation and migration of smooth muscle cells, possibly by increasing cell surface expression of the urokinase receptor uPAR/PLAUR. This may promote extracellular matrix proteolysis and hence facilitate cell migration. By acting on the migration of intimal smooth muscle cells, may accelerate intimal thickening following vascular injury (PubMed:14764453, PubMed:17332490). Promotes adhesion of monocytes (By similarity). Stimulates proliferation and migration of monocytes/macrophages (PubMed:17332490). Through its action on intimal smooth muscle cells and macrophages, may accelerate intimal thickening and macrophage foam cell formation in the process of atherosclerosis (By similarity). Regulates hypoxia-enhanced adhesion of hematopoietic stem and progenitor cells to the bone marrow stromal cells via a PLAUR-mediated pathway. This function is mediated by the N-terminal ectodomain (By similarity). Metabolic regulator, which functions to maintain the adequate balance between lipid storage and oxidation in response to changing environmental conditions, such as temperature and diet. The N-terminal ectodomain negatively regulates adipose tissue energy expenditure, acting through the inhibition the BMP/Smad pathway (By similarity). May regulate signaling by the heterodimeric neurotrophic cytokine CLCF1-CRLF1 bound to the CNTFR receptor by promoting the endocytosis of the tripartite complex CLCF1-CRLF1-CNTFR and lysosomal degradation. May regulate IL6 signaling, decreasing cis signaling, possibly by interfering with IL6-binding to membrane-bound IL6R, while up-regulating trans signaling via soluble IL6R (By similarity).</text>
</comment>
<comment type="subunit">
    <text evidence="2 3 9">After maturation cleavage, interacts (via N-terminus) with its own propeptide; this interaction prevents interaction with other ligands, including CRLF1, GDNF, GFRA1, IL6 and IL6R. Interacts (via N-terminal ectodomain) with APP, forming a 1:1 stoichiometric complex; this interaction retains APP in the trans-Golgi network and reduces processing into soluble APP-alpha and amyloid-beta peptides. Also interacts with APP C-terminal fragment C99 and with Abeta40. Interacts with beta-secretase BACE1/BACE; this interaction may affect BACE1-binding to APP and hence reduce BACE1-dependent APP cleavage. Interacts with LRPAP1/RAP. Interacts (via C-terminal cytosolic domain) with GGA1 and GGA2 (via N-terminal VHS domain). Interacts with PACS1. May interact (via the N-terminal ectodomain) with the morphogenetic neuropeptide, also called head activator or HA; this interaction is impaired in the presence of propeptide. Interacts with neurotensin/NTS. Interacts (via the N-terminal ectodomain) with PDGFB homodimer. Interacts (via N-terminal ectodomain) with the uPA receptor PLAUR. Interacts with uPA/PLAU and PAI1/SERPINE1, either individually or in complex with each other, leading to endocytosis. Also interacts with PAI1/SERPINE1 in complex with tPA/PLAT. Interacts (via C-terminus) with AP-1 and AP-2 complexes (By similarity). Interacts with BMPR1A and BMPR1B (By similarity). Interacts with lipoprotein lipase LPL; this interaction is optimal in slightly acidic conditions. Interacts (via N-terminal ectodomain) with GDNF (via propeptide) and GDNF receptor alpha-1/GFRA1, either individually or in complex with each other. The interaction with GDNF occurs mostly intracellularly. Also interacts with other GDNF receptor alpha family members, including GFRA2, GFRA3 and GFRA4. Interacts with the insulin receptor INSR; this interaction strongly increases the surface exposure of INSR. Interacts (via cytosolic C-terminus) with STK39/SPAK. Interacts (via N-terminal ectodomain) with the heterodimeric complex CRLF1-CLC; within this complex, the interaction is mediated predominantly by the CRLF1 moiety. Interacts with CNTFR, as well as with the tripartite signaling complex formed by CRLF1, CLC and CNTFR. Interacts (via N-terminal ectodomain) with IL6; this interaction leads to IL6 internalization and lysosomal degradation. Binding of SOLRL1 secreted N-terminal ectodomain to IL6 may increase IL6 trans signaling. Interacts with secreted IL6R; this interaction leads to IL6R internalization. Also interacts with transmembrane IL6R; this interaction does not affect subcellular location. Interacts with APOE (By similarity). Interacts with apolipoprotein E-rich beta-VLDL (PubMed:8798746). Interacts with APOA5; this interaction leads to APOA5 internalization and is abolished by heparin. Interaction with APOA5 results in enhanced binding to chylomicrons. Interacts with ROCK2 (By similarity). Interacts (via cytosolic C-terminus) with PPP3CB/calcineurin A beta. Interacts with NTRK2/TRKB; this interaction facilitates NTRK2 trafficking between synaptic plasma membranes, postsynaptic densities and cell soma, hence positively regulates BDNF signaling (By similarity). Interacts (via cytosolic C-terminus) with HSPA12A in an ADP-dependent manner; this interaction affects SORL1 internalization and subcellular localization (By similarity). Interacts (via N-terminal ectodomain) with ERBB2/HER2 (By similarity).</text>
</comment>
<comment type="subcellular location">
    <subcellularLocation>
        <location evidence="3">Golgi apparatus membrane</location>
        <topology evidence="3">Single-pass type I membrane protein</topology>
    </subcellularLocation>
    <subcellularLocation>
        <location evidence="3">Golgi apparatus</location>
        <location evidence="3">trans-Golgi network membrane</location>
        <topology evidence="3">Single-pass type I membrane protein</topology>
    </subcellularLocation>
    <subcellularLocation>
        <location evidence="3">Endosome membrane</location>
        <topology evidence="3">Single-pass type I membrane protein</topology>
    </subcellularLocation>
    <subcellularLocation>
        <location evidence="3">Early endosome membrane</location>
        <topology evidence="3">Single-pass type I membrane protein</topology>
    </subcellularLocation>
    <subcellularLocation>
        <location evidence="3">Recycling endosome membrane</location>
        <topology evidence="3">Single-pass type I membrane protein</topology>
    </subcellularLocation>
    <subcellularLocation>
        <location evidence="3">Endoplasmic reticulum membrane</location>
        <topology evidence="3">Single-pass type I membrane protein</topology>
    </subcellularLocation>
    <subcellularLocation>
        <location evidence="3">Endosome</location>
        <location evidence="3">Multivesicular body membrane</location>
        <topology evidence="3">Single-pass type I membrane protein</topology>
    </subcellularLocation>
    <subcellularLocation>
        <location evidence="3">Cell membrane</location>
        <topology evidence="3">Single-pass type I membrane protein</topology>
    </subcellularLocation>
    <subcellularLocation>
        <location evidence="3">Cytoplasmic vesicle</location>
        <location evidence="3">Secretory vesicle membrane</location>
        <topology evidence="3">Single-pass type I membrane protein</topology>
    </subcellularLocation>
    <subcellularLocation>
        <location evidence="7">Secreted</location>
    </subcellularLocation>
    <text evidence="3 7">Mostly intracellular, predominantly in the trans-Golgi network (TGN) and in endosome, as well as in endosome-to-TGN recycling compartments; found at low levels on the plasma membrane (By similarity). At the cell surface, partially subjected to proteolytic shedding that releases the ectodomain (also called soluble SORLA, solLR11 or sLR11) in the extracellular milieu (PubMed:14764453). The shedding may be catalyzed by ADAM17/TACE. Following shedding, PSEN1/presenilin-1 cleaves the remaining transmembrane fragment and catalyzes the release of a C-terminal fragment in the cytosol and of a soluble N-terminal beta fragment in the extracellular milieu. The C-terminal cytosolic fragment localizes to the nucleus. At the cell surface, the full-length protein undergoes partial clathrin-dependent endocytosis guided by the clathrin adapter protein 2 (AP-2) (By similarity).</text>
</comment>
<comment type="tissue specificity">
    <text evidence="7 9">Expressed in brain, in particular the hippocampus, dentate gyrus, and cerebral cortex (at protein level) (PubMed:8798746). Also detected in liver, adrenal glands, pancreas and testis (PubMed:8798746). Expressed in smooth muscle cells, predominantly during proliferation (PubMed:14764453).</text>
</comment>
<comment type="PTM">
    <text evidence="3">Within the Golgi apparatus, the propeptide may be cleaved off by FURIN or a furin-like protease. After cleavage, the propeptide interacts with the mature protein N-terminus, preventing the association with other ligands. At the cell surface, partially subjected to proteolytic shedding that releases the ectodomain in the extracellular milieu. The shedding may be catalyzed by ADAM17/TACE. Following shedding, PSEN1/presenilin-1 cleaves the remaining transmembrane fragment and catalyzes the release of a C-terminal fragment in the cytosol and of a soluble N-terminal beta fragment in the extracellular milieu. The C-terminal cytosolic fragment localizes to the nucleus.</text>
</comment>
<comment type="PTM">
    <text evidence="3">Phosphorylation at Ser-2205 facilitates the interaction with GGA1.</text>
</comment>
<comment type="similarity">
    <text evidence="11">Belongs to the VPS10-related sortilin family. SORL1 subfamily.</text>
</comment>
<sequence>MATRSSRRESRLPFLFTLVALLPPGALCEVWTRTLHGGRAPLPQERGFRVVQGDPRELRLWERGDARGASRADEKPLRRRRSAALQPEPIKVYGQVSLNDSHNQMVVHWAGEKSNVIVALARDSLALARPRSSDVYVSYDYGKSFNKISEKLNFGAGNNTEAVVAQFYHSPADNKRYIFADAYAQYLWITFDFCNTIHGFSIPFRAADLLLHSKASNLLLGFDRSHPNKQLWKSDDFGQTWIMIQEHVKSFSWGIDPYDKPNTIYIERHEPSGYSTVFRSTDFFQSRENQEVILEEVRDFQLRDKYMFATKVVHLLGSPLQSSVQLWVSFGRKPMRAAQFVTRHPINEYYIADASEDQVFVCVSHSNNRTNLYISEAEGLKFSLSLENVLYYTPGGAGSDTLVRYFANEPFADFHRVEGLQGVYIATLINGSMNEENMRSVITFDKGGTWEFLQAPAFTGYGEKINCELSEGCSLHLAQRLSQLLNLQLRRMPILSKESAPGLIIATGSVGKNLASKTNVYISSSAGARWREALPGPHYYTWGDHGGIIMAIAQGMETNELKYSTNEGETWKAFTFSEKPVFVYGLLTEPGEKSTVFTIFGSNKENVHSWLILQVNATDALGVPCTENDYKLWSPSDERGNECLLGHKTVFKRRTPHATCFNGEDFDRPVVVSNCSCTREDYECDFGFRMSEDLALEVCVPDPGFSGKSSPPVPCPVGSTYRRSRGYRKISGDTCSGGDVEARLEGELVPCPLAEENEFILYATRKSIHRYDLASGTTEQLPLTGLRAAVALDFDYEHNCLYWSDLALDVIQRLCLNGSTGQEVIINSDLETVEALAFEPLSQLLYWVDAGFKKIEVANPDGDFRLTVVNSSVLDRPRALVLVPQEGIMFWTDWGDLKPGIYRSNMDGSAAYRLVSEDVKWPNGISVDDQWIYWTDAYLDCIERITFSGQQRSVILDRLPHPYAIAVFKNEIYWDDWSQLSIFRASKYSGSQMEILASQLTGLMDMKIFYKGKNTGSNACVPRPCSLLCLPRANNSKSCRCPDGVASSVLPSGDLMCDCPKGYELKNNTCVKEEDTCLRNQYRCSNGNCINSIWWCDFDNDCGDMSDEKNCPTTICDLDTQFRCQESGTCIPLSYKCDLEDDCGDNSDERHCEMHQCRSDEYNCSSGMCIRSSWVCDGDNDCRDWSDEANCTAIYHTCEASNFQCRNGHCIPQRWACDGDADCQDGSDEDPANCEKKCNGFRCPNGTCIPSTKHCDGLHDCSDGSDEQHCEPLCTRFMDFVCKNRQQCLFHSMVCDGIIQCRDGSDEDPAFAGCSRDPEFHKVCDEFGFQCQNGVCISLIWKCDGMDDCGDYSDEANCENPTEAPNCSRYFQFRCDNGHCIPNRWKCDRENDCGDWSDEKDCGDSHVLPSTTPAPSTCLPNYYRCGGGACVIDTWVCDGYRDCADGSDEEACPSLPNVTATSSPSQPGRCDRFEFECHQPKKCIPNWRRCDGHQDCQDGQDEANCPTHSTLTCMSWEFKCEDGEACIVLSERCDGFLDCSDESDEKACSDELTVYKVQNLQWTADFSGNVTLTWMRPKKMPSAACVYNVYYRVVGESIWKTLETHSNKTNTVLKVLKPDTTYQVKVQVQCLSKVHNTNDFVTLRTPEGLPDAPQNLQLSLHGEEEGVIVGHWSPPTHTHGLIREYIVEYSRSGSKVWTSERAASNFTEIKNLLVNTLYTVRVAAVTSRGIGNWSDSKSITTVKGKAIPPPNIHIDNYDENSLSFTLTVDGNIKVNGYVVNLFWAFDTHKQEKKTMNFQGSSVSHKVGNLTAQTAYEISAWAKTDLGDSPLSFEHVTTRGVRPPAPSLKARAINQTAVECTWTGPRNVVYGIFYATSFLDLYRNPSSLTTPLHNATVLVGKDEQYLFLVRVVMPYQGPSSDYVVVKMIPDSRLPPRHLHAVHTGKTSAVIKWESPYDSPDQDLFYAIAVKDLIRKTDRSYKVKSRNSTVEYTLSKLEPGGKYHVIVQLGNMSKDASVKITTVSLSAPDALKIITENDHVLLFWKSLALKEKYFNESRGYEIHMFDSAMNITAYLGNTTDNFFKISNLKMGHNYTFTVQARCLLGSQICGEPAVLLYDELGSGGDASAMQAARSTDVAAVVVPILFLILLSLGVGFAILYTKHRRLQSSFTAFANSHYSSRLGSAIFSSGDDLGEDDEDAPMITGFSDDVPMVIA</sequence>
<gene>
    <name type="primary">SORL1</name>
</gene>
<name>SORL_RABIT</name>
<keyword id="KW-1003">Cell membrane</keyword>
<keyword id="KW-0165">Cleavage on pair of basic residues</keyword>
<keyword id="KW-0968">Cytoplasmic vesicle</keyword>
<keyword id="KW-1015">Disulfide bond</keyword>
<keyword id="KW-0245">EGF-like domain</keyword>
<keyword id="KW-0254">Endocytosis</keyword>
<keyword id="KW-0256">Endoplasmic reticulum</keyword>
<keyword id="KW-0967">Endosome</keyword>
<keyword id="KW-0325">Glycoprotein</keyword>
<keyword id="KW-0333">Golgi apparatus</keyword>
<keyword id="KW-0472">Membrane</keyword>
<keyword id="KW-0597">Phosphoprotein</keyword>
<keyword id="KW-0675">Receptor</keyword>
<keyword id="KW-1185">Reference proteome</keyword>
<keyword id="KW-0677">Repeat</keyword>
<keyword id="KW-0964">Secreted</keyword>
<keyword id="KW-0732">Signal</keyword>
<keyword id="KW-0812">Transmembrane</keyword>
<keyword id="KW-1133">Transmembrane helix</keyword>
<keyword id="KW-0813">Transport</keyword>
<protein>
    <recommendedName>
        <fullName>Sortilin-related receptor</fullName>
    </recommendedName>
    <alternativeName>
        <fullName>Low-density lipoprotein receptor relative with 11 ligand-binding repeats</fullName>
        <shortName>LDLR relative with 11 ligand-binding repeats</shortName>
        <shortName evidence="10">LR11</shortName>
    </alternativeName>
    <alternativeName>
        <fullName>SorLA-1</fullName>
    </alternativeName>
    <alternativeName>
        <fullName>Sorting protein-related receptor containing LDLR class A repeats</fullName>
        <shortName>SorLA</shortName>
    </alternativeName>
</protein>
<reference key="1">
    <citation type="journal article" date="1996" name="J. Biol. Chem.">
        <title>Elements of neural adhesion molecules and a yeast vacuolar protein sorting receptor are present in a novel mammalian low density lipoprotein receptor family member.</title>
        <authorList>
            <person name="Yamazaki H."/>
            <person name="Bujo H."/>
            <person name="Kusunoki J."/>
            <person name="Seimiya K."/>
            <person name="Kanaki T."/>
            <person name="Morisaki N."/>
            <person name="Schneider W.J."/>
            <person name="Saito Y."/>
        </authorList>
    </citation>
    <scope>NUCLEOTIDE SEQUENCE [MRNA]</scope>
    <scope>TISSUE SPECIFICITY</scope>
    <scope>INTERACTION WITH BETA-VLDL</scope>
    <source>
        <tissue>Liver</tissue>
    </source>
</reference>
<reference key="2">
    <citation type="journal article" date="2004" name="Circ. Res.">
        <title>LR11, an LDL receptor gene family member, is a novel regulator of smooth muscle cell migration.</title>
        <authorList>
            <person name="Zhu Y."/>
            <person name="Bujo H."/>
            <person name="Yamazaki H."/>
            <person name="Ohwaki K."/>
            <person name="Jiang M."/>
            <person name="Hirayama S."/>
            <person name="Kanaki T."/>
            <person name="Shibasaki M."/>
            <person name="Takahashi K."/>
            <person name="Schneider W.J."/>
            <person name="Saito Y."/>
        </authorList>
    </citation>
    <scope>FUNCTION</scope>
    <scope>SUBCELLULAR LOCATION</scope>
    <scope>TISSUE SPECIFICITY</scope>
</reference>
<reference key="3">
    <citation type="journal article" date="2007" name="Arterioscler. Thromb. Vasc. Biol.">
        <title>A secreted soluble form of LR11, specifically expressed in intimal smooth muscle cells, accelerates formation of lipid-laden macrophages.</title>
        <authorList>
            <person name="Ohwaki K."/>
            <person name="Bujo H."/>
            <person name="Jiang M."/>
            <person name="Yamazaki H."/>
            <person name="Schneider W.J."/>
            <person name="Saito Y."/>
        </authorList>
    </citation>
    <scope>FUNCTION</scope>
</reference>
<dbReference type="EMBL" id="D86350">
    <property type="protein sequence ID" value="BAA13075.1"/>
    <property type="molecule type" value="mRNA"/>
</dbReference>
<dbReference type="RefSeq" id="NP_001076133.1">
    <property type="nucleotide sequence ID" value="NM_001082664.1"/>
</dbReference>
<dbReference type="BMRB" id="Q95209"/>
<dbReference type="SMR" id="Q95209"/>
<dbReference type="BioGRID" id="1172398">
    <property type="interactions" value="1"/>
</dbReference>
<dbReference type="FunCoup" id="Q95209">
    <property type="interactions" value="288"/>
</dbReference>
<dbReference type="STRING" id="9986.ENSOCUP00000009783"/>
<dbReference type="GlyCosmos" id="Q95209">
    <property type="glycosylation" value="28 sites, No reported glycans"/>
</dbReference>
<dbReference type="PaxDb" id="9986-ENSOCUP00000009783"/>
<dbReference type="GeneID" id="100009378"/>
<dbReference type="KEGG" id="ocu:100009378"/>
<dbReference type="CTD" id="6653"/>
<dbReference type="eggNOG" id="KOG1215">
    <property type="taxonomic scope" value="Eukaryota"/>
</dbReference>
<dbReference type="eggNOG" id="KOG3511">
    <property type="taxonomic scope" value="Eukaryota"/>
</dbReference>
<dbReference type="InParanoid" id="Q95209"/>
<dbReference type="OrthoDB" id="443634at2759"/>
<dbReference type="Proteomes" id="UP000001811">
    <property type="component" value="Unplaced"/>
</dbReference>
<dbReference type="GO" id="GO:0005769">
    <property type="term" value="C:early endosome"/>
    <property type="evidence" value="ECO:0000250"/>
    <property type="project" value="UniProtKB"/>
</dbReference>
<dbReference type="GO" id="GO:0031901">
    <property type="term" value="C:early endosome membrane"/>
    <property type="evidence" value="ECO:0007669"/>
    <property type="project" value="UniProtKB-SubCell"/>
</dbReference>
<dbReference type="GO" id="GO:0005783">
    <property type="term" value="C:endoplasmic reticulum"/>
    <property type="evidence" value="ECO:0000250"/>
    <property type="project" value="UniProtKB"/>
</dbReference>
<dbReference type="GO" id="GO:0005789">
    <property type="term" value="C:endoplasmic reticulum membrane"/>
    <property type="evidence" value="ECO:0007669"/>
    <property type="project" value="UniProtKB-SubCell"/>
</dbReference>
<dbReference type="GO" id="GO:0005768">
    <property type="term" value="C:endosome"/>
    <property type="evidence" value="ECO:0000250"/>
    <property type="project" value="UniProtKB"/>
</dbReference>
<dbReference type="GO" id="GO:0005615">
    <property type="term" value="C:extracellular space"/>
    <property type="evidence" value="ECO:0000314"/>
    <property type="project" value="UniProtKB"/>
</dbReference>
<dbReference type="GO" id="GO:0005794">
    <property type="term" value="C:Golgi apparatus"/>
    <property type="evidence" value="ECO:0000250"/>
    <property type="project" value="UniProtKB"/>
</dbReference>
<dbReference type="GO" id="GO:0000139">
    <property type="term" value="C:Golgi membrane"/>
    <property type="evidence" value="ECO:0007669"/>
    <property type="project" value="UniProtKB-SubCell"/>
</dbReference>
<dbReference type="GO" id="GO:0016020">
    <property type="term" value="C:membrane"/>
    <property type="evidence" value="ECO:0000314"/>
    <property type="project" value="UniProtKB"/>
</dbReference>
<dbReference type="GO" id="GO:0005771">
    <property type="term" value="C:multivesicular body"/>
    <property type="evidence" value="ECO:0000250"/>
    <property type="project" value="UniProtKB"/>
</dbReference>
<dbReference type="GO" id="GO:0032585">
    <property type="term" value="C:multivesicular body membrane"/>
    <property type="evidence" value="ECO:0007669"/>
    <property type="project" value="UniProtKB-SubCell"/>
</dbReference>
<dbReference type="GO" id="GO:0005886">
    <property type="term" value="C:plasma membrane"/>
    <property type="evidence" value="ECO:0000250"/>
    <property type="project" value="UniProtKB"/>
</dbReference>
<dbReference type="GO" id="GO:0055038">
    <property type="term" value="C:recycling endosome membrane"/>
    <property type="evidence" value="ECO:0007669"/>
    <property type="project" value="UniProtKB-SubCell"/>
</dbReference>
<dbReference type="GO" id="GO:0030658">
    <property type="term" value="C:transport vesicle membrane"/>
    <property type="evidence" value="ECO:0007669"/>
    <property type="project" value="UniProtKB-SubCell"/>
</dbReference>
<dbReference type="GO" id="GO:1990845">
    <property type="term" value="P:adaptive thermogenesis"/>
    <property type="evidence" value="ECO:0000250"/>
    <property type="project" value="UniProtKB"/>
</dbReference>
<dbReference type="GO" id="GO:0002024">
    <property type="term" value="P:diet induced thermogenesis"/>
    <property type="evidence" value="ECO:0000250"/>
    <property type="project" value="UniProtKB"/>
</dbReference>
<dbReference type="GO" id="GO:0006897">
    <property type="term" value="P:endocytosis"/>
    <property type="evidence" value="ECO:0007669"/>
    <property type="project" value="UniProtKB-KW"/>
</dbReference>
<dbReference type="GO" id="GO:0038020">
    <property type="term" value="P:insulin receptor recycling"/>
    <property type="evidence" value="ECO:0000250"/>
    <property type="project" value="UniProtKB"/>
</dbReference>
<dbReference type="GO" id="GO:0030514">
    <property type="term" value="P:negative regulation of BMP signaling pathway"/>
    <property type="evidence" value="ECO:0000250"/>
    <property type="project" value="UniProtKB"/>
</dbReference>
<dbReference type="GO" id="GO:0010897">
    <property type="term" value="P:negative regulation of triglyceride catabolic process"/>
    <property type="evidence" value="ECO:0000250"/>
    <property type="project" value="UniProtKB"/>
</dbReference>
<dbReference type="GO" id="GO:1904179">
    <property type="term" value="P:positive regulation of adipose tissue development"/>
    <property type="evidence" value="ECO:0000250"/>
    <property type="project" value="UniProtKB"/>
</dbReference>
<dbReference type="GO" id="GO:0046628">
    <property type="term" value="P:positive regulation of insulin receptor signaling pathway"/>
    <property type="evidence" value="ECO:0000250"/>
    <property type="project" value="UniProtKB"/>
</dbReference>
<dbReference type="GO" id="GO:0006892">
    <property type="term" value="P:post-Golgi vesicle-mediated transport"/>
    <property type="evidence" value="ECO:0007669"/>
    <property type="project" value="TreeGrafter"/>
</dbReference>
<dbReference type="GO" id="GO:0045053">
    <property type="term" value="P:protein retention in Golgi apparatus"/>
    <property type="evidence" value="ECO:0007669"/>
    <property type="project" value="TreeGrafter"/>
</dbReference>
<dbReference type="GO" id="GO:0006605">
    <property type="term" value="P:protein targeting"/>
    <property type="evidence" value="ECO:0000250"/>
    <property type="project" value="UniProtKB"/>
</dbReference>
<dbReference type="GO" id="GO:0006622">
    <property type="term" value="P:protein targeting to lysosome"/>
    <property type="evidence" value="ECO:0007669"/>
    <property type="project" value="TreeGrafter"/>
</dbReference>
<dbReference type="GO" id="GO:0014910">
    <property type="term" value="P:regulation of smooth muscle cell migration"/>
    <property type="evidence" value="ECO:0000314"/>
    <property type="project" value="UniProtKB"/>
</dbReference>
<dbReference type="CDD" id="cd00063">
    <property type="entry name" value="FN3"/>
    <property type="match status" value="5"/>
</dbReference>
<dbReference type="CDD" id="cd00112">
    <property type="entry name" value="LDLa"/>
    <property type="match status" value="11"/>
</dbReference>
<dbReference type="FunFam" id="4.10.400.10:FF:000006">
    <property type="entry name" value="Putative low-density lipoprotein receptor"/>
    <property type="match status" value="1"/>
</dbReference>
<dbReference type="FunFam" id="2.130.10.10:FF:000303">
    <property type="entry name" value="Sortilin related receptor 1"/>
    <property type="match status" value="1"/>
</dbReference>
<dbReference type="FunFam" id="2.60.40.10:FF:000404">
    <property type="entry name" value="Sortilin related receptor 1"/>
    <property type="match status" value="1"/>
</dbReference>
<dbReference type="FunFam" id="2.60.40.10:FF:000416">
    <property type="entry name" value="Sortilin related receptor 1"/>
    <property type="match status" value="1"/>
</dbReference>
<dbReference type="FunFam" id="2.60.40.10:FF:000461">
    <property type="entry name" value="Sortilin related receptor 1"/>
    <property type="match status" value="1"/>
</dbReference>
<dbReference type="FunFam" id="2.60.40.10:FF:001616">
    <property type="entry name" value="Sortilin related receptor 1"/>
    <property type="match status" value="1"/>
</dbReference>
<dbReference type="FunFam" id="4.10.400.10:FF:000027">
    <property type="entry name" value="Sortilin related receptor 1"/>
    <property type="match status" value="1"/>
</dbReference>
<dbReference type="FunFam" id="4.10.400.10:FF:000030">
    <property type="entry name" value="Sortilin related receptor 1"/>
    <property type="match status" value="1"/>
</dbReference>
<dbReference type="FunFam" id="4.10.400.10:FF:000036">
    <property type="entry name" value="Sortilin related receptor 1"/>
    <property type="match status" value="1"/>
</dbReference>
<dbReference type="FunFam" id="4.10.400.10:FF:000037">
    <property type="entry name" value="Sortilin related receptor 1"/>
    <property type="match status" value="1"/>
</dbReference>
<dbReference type="FunFam" id="4.10.400.10:FF:000039">
    <property type="entry name" value="Sortilin related receptor 1"/>
    <property type="match status" value="1"/>
</dbReference>
<dbReference type="FunFam" id="4.10.400.10:FF:000041">
    <property type="entry name" value="Sortilin related receptor 1"/>
    <property type="match status" value="1"/>
</dbReference>
<dbReference type="FunFam" id="4.10.400.10:FF:000048">
    <property type="entry name" value="Sortilin related receptor 1"/>
    <property type="match status" value="1"/>
</dbReference>
<dbReference type="FunFam" id="4.10.400.10:FF:000052">
    <property type="entry name" value="Sortilin related receptor 1"/>
    <property type="match status" value="1"/>
</dbReference>
<dbReference type="FunFam" id="4.10.400.10:FF:000060">
    <property type="entry name" value="Sortilin related receptor 1"/>
    <property type="match status" value="1"/>
</dbReference>
<dbReference type="FunFam" id="2.10.70.80:FF:000002">
    <property type="entry name" value="Sortilin-related receptor isoform A"/>
    <property type="match status" value="1"/>
</dbReference>
<dbReference type="FunFam" id="2.120.10.30:FF:000021">
    <property type="entry name" value="Sortilin-related receptor isoform A"/>
    <property type="match status" value="1"/>
</dbReference>
<dbReference type="FunFam" id="3.30.60.270:FF:000002">
    <property type="entry name" value="Sortilin-related receptor isoform A"/>
    <property type="match status" value="1"/>
</dbReference>
<dbReference type="FunFam" id="4.10.400.10:FF:000033">
    <property type="entry name" value="Sortilin-related receptor isoform A"/>
    <property type="match status" value="1"/>
</dbReference>
<dbReference type="Gene3D" id="2.10.70.80">
    <property type="match status" value="1"/>
</dbReference>
<dbReference type="Gene3D" id="3.30.60.270">
    <property type="match status" value="1"/>
</dbReference>
<dbReference type="Gene3D" id="2.60.40.10">
    <property type="entry name" value="Immunoglobulins"/>
    <property type="match status" value="4"/>
</dbReference>
<dbReference type="Gene3D" id="4.10.400.10">
    <property type="entry name" value="Low-density Lipoprotein Receptor"/>
    <property type="match status" value="11"/>
</dbReference>
<dbReference type="Gene3D" id="2.120.10.30">
    <property type="entry name" value="TolB, C-terminal domain"/>
    <property type="match status" value="1"/>
</dbReference>
<dbReference type="Gene3D" id="2.130.10.10">
    <property type="entry name" value="YVTN repeat-like/Quinoprotein amine dehydrogenase"/>
    <property type="match status" value="1"/>
</dbReference>
<dbReference type="InterPro" id="IPR011042">
    <property type="entry name" value="6-blade_b-propeller_TolB-like"/>
</dbReference>
<dbReference type="InterPro" id="IPR003961">
    <property type="entry name" value="FN3_dom"/>
</dbReference>
<dbReference type="InterPro" id="IPR036116">
    <property type="entry name" value="FN3_sf"/>
</dbReference>
<dbReference type="InterPro" id="IPR013783">
    <property type="entry name" value="Ig-like_fold"/>
</dbReference>
<dbReference type="InterPro" id="IPR036055">
    <property type="entry name" value="LDL_receptor-like_sf"/>
</dbReference>
<dbReference type="InterPro" id="IPR023415">
    <property type="entry name" value="LDLR_class-A_CS"/>
</dbReference>
<dbReference type="InterPro" id="IPR000033">
    <property type="entry name" value="LDLR_classB_rpt"/>
</dbReference>
<dbReference type="InterPro" id="IPR002172">
    <property type="entry name" value="LDrepeatLR_classA_rpt"/>
</dbReference>
<dbReference type="InterPro" id="IPR031777">
    <property type="entry name" value="Sortilin_C"/>
</dbReference>
<dbReference type="InterPro" id="IPR031778">
    <property type="entry name" value="Sortilin_N"/>
</dbReference>
<dbReference type="InterPro" id="IPR006581">
    <property type="entry name" value="VPS10"/>
</dbReference>
<dbReference type="InterPro" id="IPR050310">
    <property type="entry name" value="VPS10-sortilin"/>
</dbReference>
<dbReference type="InterPro" id="IPR015943">
    <property type="entry name" value="WD40/YVTN_repeat-like_dom_sf"/>
</dbReference>
<dbReference type="PANTHER" id="PTHR12106">
    <property type="entry name" value="SORTILIN RELATED"/>
    <property type="match status" value="1"/>
</dbReference>
<dbReference type="PANTHER" id="PTHR12106:SF27">
    <property type="entry name" value="SORTILIN-RELATED RECEPTOR"/>
    <property type="match status" value="1"/>
</dbReference>
<dbReference type="Pfam" id="PF00041">
    <property type="entry name" value="fn3"/>
    <property type="match status" value="3"/>
</dbReference>
<dbReference type="Pfam" id="PF00057">
    <property type="entry name" value="Ldl_recept_a"/>
    <property type="match status" value="10"/>
</dbReference>
<dbReference type="Pfam" id="PF00058">
    <property type="entry name" value="Ldl_recept_b"/>
    <property type="match status" value="1"/>
</dbReference>
<dbReference type="Pfam" id="PF15902">
    <property type="entry name" value="Sortilin-Vps10"/>
    <property type="match status" value="1"/>
</dbReference>
<dbReference type="Pfam" id="PF15901">
    <property type="entry name" value="Sortilin_C"/>
    <property type="match status" value="1"/>
</dbReference>
<dbReference type="PRINTS" id="PR00261">
    <property type="entry name" value="LDLRECEPTOR"/>
</dbReference>
<dbReference type="SMART" id="SM00060">
    <property type="entry name" value="FN3"/>
    <property type="match status" value="6"/>
</dbReference>
<dbReference type="SMART" id="SM00192">
    <property type="entry name" value="LDLa"/>
    <property type="match status" value="11"/>
</dbReference>
<dbReference type="SMART" id="SM00135">
    <property type="entry name" value="LY"/>
    <property type="match status" value="5"/>
</dbReference>
<dbReference type="SMART" id="SM00602">
    <property type="entry name" value="VPS10"/>
    <property type="match status" value="1"/>
</dbReference>
<dbReference type="SUPFAM" id="SSF49265">
    <property type="entry name" value="Fibronectin type III"/>
    <property type="match status" value="3"/>
</dbReference>
<dbReference type="SUPFAM" id="SSF57424">
    <property type="entry name" value="LDL receptor-like module"/>
    <property type="match status" value="11"/>
</dbReference>
<dbReference type="SUPFAM" id="SSF110296">
    <property type="entry name" value="Oligoxyloglucan reducing end-specific cellobiohydrolase"/>
    <property type="match status" value="1"/>
</dbReference>
<dbReference type="SUPFAM" id="SSF63825">
    <property type="entry name" value="YWTD domain"/>
    <property type="match status" value="1"/>
</dbReference>
<dbReference type="PROSITE" id="PS01186">
    <property type="entry name" value="EGF_2"/>
    <property type="match status" value="1"/>
</dbReference>
<dbReference type="PROSITE" id="PS50853">
    <property type="entry name" value="FN3"/>
    <property type="match status" value="4"/>
</dbReference>
<dbReference type="PROSITE" id="PS01209">
    <property type="entry name" value="LDLRA_1"/>
    <property type="match status" value="10"/>
</dbReference>
<dbReference type="PROSITE" id="PS50068">
    <property type="entry name" value="LDLRA_2"/>
    <property type="match status" value="11"/>
</dbReference>
<dbReference type="PROSITE" id="PS51120">
    <property type="entry name" value="LDLRB"/>
    <property type="match status" value="5"/>
</dbReference>